<proteinExistence type="inferred from homology"/>
<dbReference type="EC" id="3.6.1.9" evidence="1"/>
<dbReference type="EMBL" id="CP001291">
    <property type="protein sequence ID" value="ACK69579.1"/>
    <property type="molecule type" value="Genomic_DNA"/>
</dbReference>
<dbReference type="RefSeq" id="WP_012598525.1">
    <property type="nucleotide sequence ID" value="NC_011729.1"/>
</dbReference>
<dbReference type="SMR" id="B7KJY0"/>
<dbReference type="STRING" id="65393.PCC7424_1128"/>
<dbReference type="KEGG" id="cyc:PCC7424_1128"/>
<dbReference type="eggNOG" id="COG0424">
    <property type="taxonomic scope" value="Bacteria"/>
</dbReference>
<dbReference type="HOGENOM" id="CLU_040416_1_2_3"/>
<dbReference type="OrthoDB" id="9807767at2"/>
<dbReference type="Proteomes" id="UP000002384">
    <property type="component" value="Chromosome"/>
</dbReference>
<dbReference type="GO" id="GO:0005737">
    <property type="term" value="C:cytoplasm"/>
    <property type="evidence" value="ECO:0007669"/>
    <property type="project" value="UniProtKB-SubCell"/>
</dbReference>
<dbReference type="GO" id="GO:0047429">
    <property type="term" value="F:nucleoside triphosphate diphosphatase activity"/>
    <property type="evidence" value="ECO:0007669"/>
    <property type="project" value="UniProtKB-EC"/>
</dbReference>
<dbReference type="GO" id="GO:0009117">
    <property type="term" value="P:nucleotide metabolic process"/>
    <property type="evidence" value="ECO:0007669"/>
    <property type="project" value="UniProtKB-KW"/>
</dbReference>
<dbReference type="CDD" id="cd00555">
    <property type="entry name" value="Maf"/>
    <property type="match status" value="1"/>
</dbReference>
<dbReference type="Gene3D" id="3.90.950.10">
    <property type="match status" value="1"/>
</dbReference>
<dbReference type="HAMAP" id="MF_00528">
    <property type="entry name" value="Maf"/>
    <property type="match status" value="1"/>
</dbReference>
<dbReference type="InterPro" id="IPR029001">
    <property type="entry name" value="ITPase-like_fam"/>
</dbReference>
<dbReference type="InterPro" id="IPR003697">
    <property type="entry name" value="Maf-like"/>
</dbReference>
<dbReference type="NCBIfam" id="TIGR00172">
    <property type="entry name" value="maf"/>
    <property type="match status" value="1"/>
</dbReference>
<dbReference type="PANTHER" id="PTHR43213">
    <property type="entry name" value="BIFUNCTIONAL DTTP/UTP PYROPHOSPHATASE/METHYLTRANSFERASE PROTEIN-RELATED"/>
    <property type="match status" value="1"/>
</dbReference>
<dbReference type="PANTHER" id="PTHR43213:SF5">
    <property type="entry name" value="BIFUNCTIONAL DTTP_UTP PYROPHOSPHATASE_METHYLTRANSFERASE PROTEIN-RELATED"/>
    <property type="match status" value="1"/>
</dbReference>
<dbReference type="Pfam" id="PF02545">
    <property type="entry name" value="Maf"/>
    <property type="match status" value="1"/>
</dbReference>
<dbReference type="PIRSF" id="PIRSF006305">
    <property type="entry name" value="Maf"/>
    <property type="match status" value="1"/>
</dbReference>
<dbReference type="SUPFAM" id="SSF52972">
    <property type="entry name" value="ITPase-like"/>
    <property type="match status" value="1"/>
</dbReference>
<accession>B7KJY0</accession>
<keyword id="KW-0963">Cytoplasm</keyword>
<keyword id="KW-0378">Hydrolase</keyword>
<keyword id="KW-0546">Nucleotide metabolism</keyword>
<keyword id="KW-1185">Reference proteome</keyword>
<evidence type="ECO:0000255" key="1">
    <source>
        <dbReference type="HAMAP-Rule" id="MF_00528"/>
    </source>
</evidence>
<organism>
    <name type="scientific">Gloeothece citriformis (strain PCC 7424)</name>
    <name type="common">Cyanothece sp. (strain PCC 7424)</name>
    <dbReference type="NCBI Taxonomy" id="65393"/>
    <lineage>
        <taxon>Bacteria</taxon>
        <taxon>Bacillati</taxon>
        <taxon>Cyanobacteriota</taxon>
        <taxon>Cyanophyceae</taxon>
        <taxon>Oscillatoriophycideae</taxon>
        <taxon>Chroococcales</taxon>
        <taxon>Aphanothecaceae</taxon>
        <taxon>Gloeothece</taxon>
        <taxon>Gloeothece citriformis</taxon>
    </lineage>
</organism>
<feature type="chain" id="PRO_1000146289" description="Nucleoside triphosphate pyrophosphatase">
    <location>
        <begin position="1"/>
        <end position="196"/>
    </location>
</feature>
<feature type="active site" description="Proton acceptor" evidence="1">
    <location>
        <position position="70"/>
    </location>
</feature>
<gene>
    <name type="ordered locus">PCC7424_1128</name>
</gene>
<reference key="1">
    <citation type="journal article" date="2011" name="MBio">
        <title>Novel metabolic attributes of the genus Cyanothece, comprising a group of unicellular nitrogen-fixing Cyanobacteria.</title>
        <authorList>
            <person name="Bandyopadhyay A."/>
            <person name="Elvitigala T."/>
            <person name="Welsh E."/>
            <person name="Stockel J."/>
            <person name="Liberton M."/>
            <person name="Min H."/>
            <person name="Sherman L.A."/>
            <person name="Pakrasi H.B."/>
        </authorList>
    </citation>
    <scope>NUCLEOTIDE SEQUENCE [LARGE SCALE GENOMIC DNA]</scope>
    <source>
        <strain>PCC 7424</strain>
    </source>
</reference>
<sequence>MTIPFILASASPARRKLLQTMGIDPIVRHSNFDESQIQLTDTIALVQTLAQCKAEVVANEVNEGLILGCDSLLEVDTQSYGKPESPEEAIIRWQKMRGNSGVLYTGHALIDKTQNKQLLRCGITQVYFADVSDAEIKAYVASGEPLKCAGCFALEGKGGLFVEKLEGCHSNVIGLSLPLLREMLNELGYTVMDFWQ</sequence>
<protein>
    <recommendedName>
        <fullName evidence="1">Nucleoside triphosphate pyrophosphatase</fullName>
        <ecNumber evidence="1">3.6.1.9</ecNumber>
    </recommendedName>
    <alternativeName>
        <fullName evidence="1">Nucleotide pyrophosphatase</fullName>
        <shortName evidence="1">Nucleotide PPase</shortName>
    </alternativeName>
</protein>
<name>NTPP_GLOC7</name>
<comment type="function">
    <text evidence="1">Nucleoside triphosphate pyrophosphatase. May have a dual role in cell division arrest and in preventing the incorporation of modified nucleotides into cellular nucleic acids.</text>
</comment>
<comment type="catalytic activity">
    <reaction evidence="1">
        <text>a ribonucleoside 5'-triphosphate + H2O = a ribonucleoside 5'-phosphate + diphosphate + H(+)</text>
        <dbReference type="Rhea" id="RHEA:23996"/>
        <dbReference type="ChEBI" id="CHEBI:15377"/>
        <dbReference type="ChEBI" id="CHEBI:15378"/>
        <dbReference type="ChEBI" id="CHEBI:33019"/>
        <dbReference type="ChEBI" id="CHEBI:58043"/>
        <dbReference type="ChEBI" id="CHEBI:61557"/>
        <dbReference type="EC" id="3.6.1.9"/>
    </reaction>
</comment>
<comment type="catalytic activity">
    <reaction evidence="1">
        <text>a 2'-deoxyribonucleoside 5'-triphosphate + H2O = a 2'-deoxyribonucleoside 5'-phosphate + diphosphate + H(+)</text>
        <dbReference type="Rhea" id="RHEA:44644"/>
        <dbReference type="ChEBI" id="CHEBI:15377"/>
        <dbReference type="ChEBI" id="CHEBI:15378"/>
        <dbReference type="ChEBI" id="CHEBI:33019"/>
        <dbReference type="ChEBI" id="CHEBI:61560"/>
        <dbReference type="ChEBI" id="CHEBI:65317"/>
        <dbReference type="EC" id="3.6.1.9"/>
    </reaction>
</comment>
<comment type="cofactor">
    <cofactor evidence="1">
        <name>a divalent metal cation</name>
        <dbReference type="ChEBI" id="CHEBI:60240"/>
    </cofactor>
</comment>
<comment type="subcellular location">
    <subcellularLocation>
        <location evidence="1">Cytoplasm</location>
    </subcellularLocation>
</comment>
<comment type="similarity">
    <text evidence="1">Belongs to the Maf family.</text>
</comment>